<feature type="chain" id="PRO_0000285686" description="Protein KTI12 homolog">
    <location>
        <begin position="1"/>
        <end position="354"/>
    </location>
</feature>
<feature type="region of interest" description="Disordered" evidence="2">
    <location>
        <begin position="116"/>
        <end position="149"/>
    </location>
</feature>
<feature type="region of interest" description="Disordered" evidence="2">
    <location>
        <begin position="162"/>
        <end position="199"/>
    </location>
</feature>
<feature type="compositionally biased region" description="Basic and acidic residues" evidence="2">
    <location>
        <begin position="170"/>
        <end position="179"/>
    </location>
</feature>
<feature type="binding site" evidence="1">
    <location>
        <begin position="8"/>
        <end position="15"/>
    </location>
    <ligand>
        <name>ATP</name>
        <dbReference type="ChEBI" id="CHEBI:30616"/>
    </ligand>
</feature>
<feature type="modified residue" description="Phosphoserine" evidence="6 7">
    <location>
        <position position="184"/>
    </location>
</feature>
<feature type="modified residue" description="Phosphoserine" evidence="4 5 6 7">
    <location>
        <position position="200"/>
    </location>
</feature>
<feature type="sequence variant" id="VAR_032046" description="In dbSNP:rs2783175.">
    <original>D</original>
    <variation>E</variation>
    <location>
        <position position="191"/>
    </location>
</feature>
<keyword id="KW-0067">ATP-binding</keyword>
<keyword id="KW-0547">Nucleotide-binding</keyword>
<keyword id="KW-0597">Phosphoprotein</keyword>
<keyword id="KW-1267">Proteomics identification</keyword>
<keyword id="KW-1185">Reference proteome</keyword>
<proteinExistence type="evidence at protein level"/>
<protein>
    <recommendedName>
        <fullName>Protein KTI12 homolog</fullName>
    </recommendedName>
</protein>
<evidence type="ECO:0000255" key="1"/>
<evidence type="ECO:0000256" key="2">
    <source>
        <dbReference type="SAM" id="MobiDB-lite"/>
    </source>
</evidence>
<evidence type="ECO:0000305" key="3"/>
<evidence type="ECO:0007744" key="4">
    <source>
    </source>
</evidence>
<evidence type="ECO:0007744" key="5">
    <source>
    </source>
</evidence>
<evidence type="ECO:0007744" key="6">
    <source>
    </source>
</evidence>
<evidence type="ECO:0007744" key="7">
    <source>
    </source>
</evidence>
<name>KTI12_HUMAN</name>
<gene>
    <name type="primary">KTI12</name>
    <name type="ORF">SBBI81</name>
</gene>
<accession>Q96EK9</accession>
<dbReference type="EMBL" id="AF327348">
    <property type="protein sequence ID" value="AAL56009.1"/>
    <property type="molecule type" value="mRNA"/>
</dbReference>
<dbReference type="EMBL" id="AL445685">
    <property type="status" value="NOT_ANNOTATED_CDS"/>
    <property type="molecule type" value="Genomic_DNA"/>
</dbReference>
<dbReference type="EMBL" id="BC012173">
    <property type="protein sequence ID" value="AAH12173.1"/>
    <property type="molecule type" value="mRNA"/>
</dbReference>
<dbReference type="CCDS" id="CCDS562.1"/>
<dbReference type="RefSeq" id="NP_612426.1">
    <property type="nucleotide sequence ID" value="NM_138417.3"/>
</dbReference>
<dbReference type="SMR" id="Q96EK9"/>
<dbReference type="BioGRID" id="125220">
    <property type="interactions" value="35"/>
</dbReference>
<dbReference type="FunCoup" id="Q96EK9">
    <property type="interactions" value="855"/>
</dbReference>
<dbReference type="IntAct" id="Q96EK9">
    <property type="interactions" value="4"/>
</dbReference>
<dbReference type="MINT" id="Q96EK9"/>
<dbReference type="STRING" id="9606.ENSP00000360676"/>
<dbReference type="iPTMnet" id="Q96EK9"/>
<dbReference type="PhosphoSitePlus" id="Q96EK9"/>
<dbReference type="SwissPalm" id="Q96EK9"/>
<dbReference type="BioMuta" id="KTI12"/>
<dbReference type="DMDM" id="74751844"/>
<dbReference type="jPOST" id="Q96EK9"/>
<dbReference type="MassIVE" id="Q96EK9"/>
<dbReference type="PaxDb" id="9606-ENSP00000360676"/>
<dbReference type="PeptideAtlas" id="Q96EK9"/>
<dbReference type="ProteomicsDB" id="76421"/>
<dbReference type="Pumba" id="Q96EK9"/>
<dbReference type="Antibodypedia" id="32985">
    <property type="antibodies" value="50 antibodies from 14 providers"/>
</dbReference>
<dbReference type="DNASU" id="112970"/>
<dbReference type="Ensembl" id="ENST00000371614.2">
    <property type="protein sequence ID" value="ENSP00000360676.1"/>
    <property type="gene ID" value="ENSG00000198841.4"/>
</dbReference>
<dbReference type="GeneID" id="112970"/>
<dbReference type="KEGG" id="hsa:112970"/>
<dbReference type="MANE-Select" id="ENST00000371614.2">
    <property type="protein sequence ID" value="ENSP00000360676.1"/>
    <property type="RefSeq nucleotide sequence ID" value="NM_138417.3"/>
    <property type="RefSeq protein sequence ID" value="NP_612426.1"/>
</dbReference>
<dbReference type="UCSC" id="uc001ctj.2">
    <property type="organism name" value="human"/>
</dbReference>
<dbReference type="AGR" id="HGNC:25160"/>
<dbReference type="CTD" id="112970"/>
<dbReference type="DisGeNET" id="112970"/>
<dbReference type="GeneCards" id="KTI12"/>
<dbReference type="HGNC" id="HGNC:25160">
    <property type="gene designation" value="KTI12"/>
</dbReference>
<dbReference type="HPA" id="ENSG00000198841">
    <property type="expression patterns" value="Low tissue specificity"/>
</dbReference>
<dbReference type="neXtProt" id="NX_Q96EK9"/>
<dbReference type="OpenTargets" id="ENSG00000198841"/>
<dbReference type="PharmGKB" id="PA142671571"/>
<dbReference type="VEuPathDB" id="HostDB:ENSG00000198841"/>
<dbReference type="eggNOG" id="KOG3062">
    <property type="taxonomic scope" value="Eukaryota"/>
</dbReference>
<dbReference type="GeneTree" id="ENSGT00390000002443"/>
<dbReference type="HOGENOM" id="CLU_027147_0_0_1"/>
<dbReference type="InParanoid" id="Q96EK9"/>
<dbReference type="OMA" id="THSRWDK"/>
<dbReference type="OrthoDB" id="9972657at2759"/>
<dbReference type="PAN-GO" id="Q96EK9">
    <property type="GO annotations" value="0 GO annotations based on evolutionary models"/>
</dbReference>
<dbReference type="PhylomeDB" id="Q96EK9"/>
<dbReference type="TreeFam" id="TF312974"/>
<dbReference type="PathwayCommons" id="Q96EK9"/>
<dbReference type="SignaLink" id="Q96EK9"/>
<dbReference type="BioGRID-ORCS" id="112970">
    <property type="hits" value="553 hits in 1176 CRISPR screens"/>
</dbReference>
<dbReference type="GenomeRNAi" id="112970"/>
<dbReference type="Pharos" id="Q96EK9">
    <property type="development level" value="Tdark"/>
</dbReference>
<dbReference type="PRO" id="PR:Q96EK9"/>
<dbReference type="Proteomes" id="UP000005640">
    <property type="component" value="Chromosome 1"/>
</dbReference>
<dbReference type="RNAct" id="Q96EK9">
    <property type="molecule type" value="protein"/>
</dbReference>
<dbReference type="Bgee" id="ENSG00000198841">
    <property type="expression patterns" value="Expressed in primordial germ cell in gonad and 112 other cell types or tissues"/>
</dbReference>
<dbReference type="GO" id="GO:0005524">
    <property type="term" value="F:ATP binding"/>
    <property type="evidence" value="ECO:0007669"/>
    <property type="project" value="UniProtKB-KW"/>
</dbReference>
<dbReference type="GO" id="GO:0002098">
    <property type="term" value="P:tRNA wobble uridine modification"/>
    <property type="evidence" value="ECO:0000318"/>
    <property type="project" value="GO_Central"/>
</dbReference>
<dbReference type="FunFam" id="3.40.50.300:FF:001981">
    <property type="entry name" value="protein KTI12 homolog"/>
    <property type="match status" value="1"/>
</dbReference>
<dbReference type="Gene3D" id="3.40.50.300">
    <property type="entry name" value="P-loop containing nucleotide triphosphate hydrolases"/>
    <property type="match status" value="1"/>
</dbReference>
<dbReference type="InterPro" id="IPR013641">
    <property type="entry name" value="KTI12/PSTK"/>
</dbReference>
<dbReference type="InterPro" id="IPR027417">
    <property type="entry name" value="P-loop_NTPase"/>
</dbReference>
<dbReference type="PANTHER" id="PTHR12435">
    <property type="match status" value="1"/>
</dbReference>
<dbReference type="Pfam" id="PF08433">
    <property type="entry name" value="KTI12"/>
    <property type="match status" value="1"/>
</dbReference>
<dbReference type="SUPFAM" id="SSF52540">
    <property type="entry name" value="P-loop containing nucleoside triphosphate hydrolases"/>
    <property type="match status" value="1"/>
</dbReference>
<organism>
    <name type="scientific">Homo sapiens</name>
    <name type="common">Human</name>
    <dbReference type="NCBI Taxonomy" id="9606"/>
    <lineage>
        <taxon>Eukaryota</taxon>
        <taxon>Metazoa</taxon>
        <taxon>Chordata</taxon>
        <taxon>Craniata</taxon>
        <taxon>Vertebrata</taxon>
        <taxon>Euteleostomi</taxon>
        <taxon>Mammalia</taxon>
        <taxon>Eutheria</taxon>
        <taxon>Euarchontoglires</taxon>
        <taxon>Primates</taxon>
        <taxon>Haplorrhini</taxon>
        <taxon>Catarrhini</taxon>
        <taxon>Hominidae</taxon>
        <taxon>Homo</taxon>
    </lineage>
</organism>
<comment type="interaction">
    <interactant intactId="EBI-7951092">
        <id>Q96EK9</id>
    </interactant>
    <interactant intactId="EBI-741101">
        <id>Q13643</id>
        <label>FHL3</label>
    </interactant>
    <organismsDiffer>false</organismsDiffer>
    <experiments>3</experiments>
</comment>
<comment type="similarity">
    <text evidence="3">Belongs to the KTI12 family.</text>
</comment>
<reference key="1">
    <citation type="submission" date="2000-12" db="EMBL/GenBank/DDBJ databases">
        <authorList>
            <person name="Zhang W."/>
            <person name="Li N."/>
            <person name="Wan T."/>
            <person name="Zhang J."/>
            <person name="Cao X."/>
        </authorList>
    </citation>
    <scope>NUCLEOTIDE SEQUENCE [LARGE SCALE MRNA]</scope>
</reference>
<reference key="2">
    <citation type="journal article" date="2006" name="Nature">
        <title>The DNA sequence and biological annotation of human chromosome 1.</title>
        <authorList>
            <person name="Gregory S.G."/>
            <person name="Barlow K.F."/>
            <person name="McLay K.E."/>
            <person name="Kaul R."/>
            <person name="Swarbreck D."/>
            <person name="Dunham A."/>
            <person name="Scott C.E."/>
            <person name="Howe K.L."/>
            <person name="Woodfine K."/>
            <person name="Spencer C.C.A."/>
            <person name="Jones M.C."/>
            <person name="Gillson C."/>
            <person name="Searle S."/>
            <person name="Zhou Y."/>
            <person name="Kokocinski F."/>
            <person name="McDonald L."/>
            <person name="Evans R."/>
            <person name="Phillips K."/>
            <person name="Atkinson A."/>
            <person name="Cooper R."/>
            <person name="Jones C."/>
            <person name="Hall R.E."/>
            <person name="Andrews T.D."/>
            <person name="Lloyd C."/>
            <person name="Ainscough R."/>
            <person name="Almeida J.P."/>
            <person name="Ambrose K.D."/>
            <person name="Anderson F."/>
            <person name="Andrew R.W."/>
            <person name="Ashwell R.I.S."/>
            <person name="Aubin K."/>
            <person name="Babbage A.K."/>
            <person name="Bagguley C.L."/>
            <person name="Bailey J."/>
            <person name="Beasley H."/>
            <person name="Bethel G."/>
            <person name="Bird C.P."/>
            <person name="Bray-Allen S."/>
            <person name="Brown J.Y."/>
            <person name="Brown A.J."/>
            <person name="Buckley D."/>
            <person name="Burton J."/>
            <person name="Bye J."/>
            <person name="Carder C."/>
            <person name="Chapman J.C."/>
            <person name="Clark S.Y."/>
            <person name="Clarke G."/>
            <person name="Clee C."/>
            <person name="Cobley V."/>
            <person name="Collier R.E."/>
            <person name="Corby N."/>
            <person name="Coville G.J."/>
            <person name="Davies J."/>
            <person name="Deadman R."/>
            <person name="Dunn M."/>
            <person name="Earthrowl M."/>
            <person name="Ellington A.G."/>
            <person name="Errington H."/>
            <person name="Frankish A."/>
            <person name="Frankland J."/>
            <person name="French L."/>
            <person name="Garner P."/>
            <person name="Garnett J."/>
            <person name="Gay L."/>
            <person name="Ghori M.R.J."/>
            <person name="Gibson R."/>
            <person name="Gilby L.M."/>
            <person name="Gillett W."/>
            <person name="Glithero R.J."/>
            <person name="Grafham D.V."/>
            <person name="Griffiths C."/>
            <person name="Griffiths-Jones S."/>
            <person name="Grocock R."/>
            <person name="Hammond S."/>
            <person name="Harrison E.S.I."/>
            <person name="Hart E."/>
            <person name="Haugen E."/>
            <person name="Heath P.D."/>
            <person name="Holmes S."/>
            <person name="Holt K."/>
            <person name="Howden P.J."/>
            <person name="Hunt A.R."/>
            <person name="Hunt S.E."/>
            <person name="Hunter G."/>
            <person name="Isherwood J."/>
            <person name="James R."/>
            <person name="Johnson C."/>
            <person name="Johnson D."/>
            <person name="Joy A."/>
            <person name="Kay M."/>
            <person name="Kershaw J.K."/>
            <person name="Kibukawa M."/>
            <person name="Kimberley A.M."/>
            <person name="King A."/>
            <person name="Knights A.J."/>
            <person name="Lad H."/>
            <person name="Laird G."/>
            <person name="Lawlor S."/>
            <person name="Leongamornlert D.A."/>
            <person name="Lloyd D.M."/>
            <person name="Loveland J."/>
            <person name="Lovell J."/>
            <person name="Lush M.J."/>
            <person name="Lyne R."/>
            <person name="Martin S."/>
            <person name="Mashreghi-Mohammadi M."/>
            <person name="Matthews L."/>
            <person name="Matthews N.S.W."/>
            <person name="McLaren S."/>
            <person name="Milne S."/>
            <person name="Mistry S."/>
            <person name="Moore M.J.F."/>
            <person name="Nickerson T."/>
            <person name="O'Dell C.N."/>
            <person name="Oliver K."/>
            <person name="Palmeiri A."/>
            <person name="Palmer S.A."/>
            <person name="Parker A."/>
            <person name="Patel D."/>
            <person name="Pearce A.V."/>
            <person name="Peck A.I."/>
            <person name="Pelan S."/>
            <person name="Phelps K."/>
            <person name="Phillimore B.J."/>
            <person name="Plumb R."/>
            <person name="Rajan J."/>
            <person name="Raymond C."/>
            <person name="Rouse G."/>
            <person name="Saenphimmachak C."/>
            <person name="Sehra H.K."/>
            <person name="Sheridan E."/>
            <person name="Shownkeen R."/>
            <person name="Sims S."/>
            <person name="Skuce C.D."/>
            <person name="Smith M."/>
            <person name="Steward C."/>
            <person name="Subramanian S."/>
            <person name="Sycamore N."/>
            <person name="Tracey A."/>
            <person name="Tromans A."/>
            <person name="Van Helmond Z."/>
            <person name="Wall M."/>
            <person name="Wallis J.M."/>
            <person name="White S."/>
            <person name="Whitehead S.L."/>
            <person name="Wilkinson J.E."/>
            <person name="Willey D.L."/>
            <person name="Williams H."/>
            <person name="Wilming L."/>
            <person name="Wray P.W."/>
            <person name="Wu Z."/>
            <person name="Coulson A."/>
            <person name="Vaudin M."/>
            <person name="Sulston J.E."/>
            <person name="Durbin R.M."/>
            <person name="Hubbard T."/>
            <person name="Wooster R."/>
            <person name="Dunham I."/>
            <person name="Carter N.P."/>
            <person name="McVean G."/>
            <person name="Ross M.T."/>
            <person name="Harrow J."/>
            <person name="Olson M.V."/>
            <person name="Beck S."/>
            <person name="Rogers J."/>
            <person name="Bentley D.R."/>
        </authorList>
    </citation>
    <scope>NUCLEOTIDE SEQUENCE [LARGE SCALE GENOMIC DNA]</scope>
</reference>
<reference key="3">
    <citation type="journal article" date="2004" name="Genome Res.">
        <title>The status, quality, and expansion of the NIH full-length cDNA project: the Mammalian Gene Collection (MGC).</title>
        <authorList>
            <consortium name="The MGC Project Team"/>
        </authorList>
    </citation>
    <scope>NUCLEOTIDE SEQUENCE [LARGE SCALE MRNA]</scope>
    <source>
        <tissue>Skin</tissue>
    </source>
</reference>
<reference key="4">
    <citation type="journal article" date="2008" name="Proc. Natl. Acad. Sci. U.S.A.">
        <title>A quantitative atlas of mitotic phosphorylation.</title>
        <authorList>
            <person name="Dephoure N."/>
            <person name="Zhou C."/>
            <person name="Villen J."/>
            <person name="Beausoleil S.A."/>
            <person name="Bakalarski C.E."/>
            <person name="Elledge S.J."/>
            <person name="Gygi S.P."/>
        </authorList>
    </citation>
    <scope>PHOSPHORYLATION [LARGE SCALE ANALYSIS] AT SER-200</scope>
    <scope>IDENTIFICATION BY MASS SPECTROMETRY [LARGE SCALE ANALYSIS]</scope>
    <source>
        <tissue>Cervix carcinoma</tissue>
    </source>
</reference>
<reference key="5">
    <citation type="journal article" date="2009" name="Sci. Signal.">
        <title>Quantitative phosphoproteomic analysis of T cell receptor signaling reveals system-wide modulation of protein-protein interactions.</title>
        <authorList>
            <person name="Mayya V."/>
            <person name="Lundgren D.H."/>
            <person name="Hwang S.-I."/>
            <person name="Rezaul K."/>
            <person name="Wu L."/>
            <person name="Eng J.K."/>
            <person name="Rodionov V."/>
            <person name="Han D.K."/>
        </authorList>
    </citation>
    <scope>PHOSPHORYLATION [LARGE SCALE ANALYSIS] AT SER-200</scope>
    <scope>IDENTIFICATION BY MASS SPECTROMETRY [LARGE SCALE ANALYSIS]</scope>
    <source>
        <tissue>Leukemic T-cell</tissue>
    </source>
</reference>
<reference key="6">
    <citation type="journal article" date="2010" name="Sci. Signal.">
        <title>Quantitative phosphoproteomics reveals widespread full phosphorylation site occupancy during mitosis.</title>
        <authorList>
            <person name="Olsen J.V."/>
            <person name="Vermeulen M."/>
            <person name="Santamaria A."/>
            <person name="Kumar C."/>
            <person name="Miller M.L."/>
            <person name="Jensen L.J."/>
            <person name="Gnad F."/>
            <person name="Cox J."/>
            <person name="Jensen T.S."/>
            <person name="Nigg E.A."/>
            <person name="Brunak S."/>
            <person name="Mann M."/>
        </authorList>
    </citation>
    <scope>PHOSPHORYLATION [LARGE SCALE ANALYSIS] AT SER-184 AND SER-200</scope>
    <scope>IDENTIFICATION BY MASS SPECTROMETRY [LARGE SCALE ANALYSIS]</scope>
    <source>
        <tissue>Cervix carcinoma</tissue>
    </source>
</reference>
<reference key="7">
    <citation type="journal article" date="2011" name="BMC Syst. Biol.">
        <title>Initial characterization of the human central proteome.</title>
        <authorList>
            <person name="Burkard T.R."/>
            <person name="Planyavsky M."/>
            <person name="Kaupe I."/>
            <person name="Breitwieser F.P."/>
            <person name="Buerckstuemmer T."/>
            <person name="Bennett K.L."/>
            <person name="Superti-Furga G."/>
            <person name="Colinge J."/>
        </authorList>
    </citation>
    <scope>IDENTIFICATION BY MASS SPECTROMETRY [LARGE SCALE ANALYSIS]</scope>
</reference>
<reference key="8">
    <citation type="journal article" date="2013" name="J. Proteome Res.">
        <title>Toward a comprehensive characterization of a human cancer cell phosphoproteome.</title>
        <authorList>
            <person name="Zhou H."/>
            <person name="Di Palma S."/>
            <person name="Preisinger C."/>
            <person name="Peng M."/>
            <person name="Polat A.N."/>
            <person name="Heck A.J."/>
            <person name="Mohammed S."/>
        </authorList>
    </citation>
    <scope>PHOSPHORYLATION [LARGE SCALE ANALYSIS] AT SER-184 AND SER-200</scope>
    <scope>IDENTIFICATION BY MASS SPECTROMETRY [LARGE SCALE ANALYSIS]</scope>
    <source>
        <tissue>Erythroleukemia</tissue>
    </source>
</reference>
<sequence length="354" mass="38616">MPLVVFCGLPYSGKSRRAEELRVALAAEGRAVYVVDDAAVLGAEDPAVYGDSAREKALRGALRASVERRLSRHDVVILDSLNYIKGFRYELYCLARAARTPLCLVYCVRPGGPIAGPQVAGANENPGRNVSVSWRPRAEEDGRAQAAGSSVLRELHTADSVVNGSAQADVPKELEREESGAAESPALVTPDSEKSAKHGSGAFYSPELLEALTLRFEAPDSRNRWDRPLFTLVGLEEPLPLAGIRSALFENRAPPPHQSTQSQPLASGSFLHQLDQVTSQVLAGLMEAQKSAVPGDLLTLPGTTEHLRFTRPLTMAELSRLRRQFISYTKMHPNNENLPQLANMFLQYLSQSLH</sequence>